<sequence length="379" mass="42725">MTNIRKTHPLMKIVNSSFIDLPAPSNISSWWNFGSLLGICLIMQILTGLFLAMHYTSDTMTAFSSVTHICRDVNYGWLIRYLHANGASMFFICLFLHVGRGLYYGSYMYLETWNIGVLLLFAVMATAFMGYVLPWGQMSFWGATVITNLLSAIPYIGTNLVEWIWGGFSVDKATLTRFFAFHFILPFIVAALAGVHLLFLHETGSNNPSGLNSDTDKIPFHPYYTIKDILGALIMISMLSSLVLFSPDMXGDPDNXXXXNPLNTPPHIKPEWYFLFAXAILRSIPNKLGGVLALVLSILILMIIPLLHTAKQRSMMFRPMSQCMFWILVADLLTLTWIGGQPVEYPFVVIGXLASVIYFLIILFIMPITSMIENQLLKW</sequence>
<comment type="function">
    <text evidence="2">Component of the ubiquinol-cytochrome c reductase complex (complex III or cytochrome b-c1 complex) that is part of the mitochondrial respiratory chain. The b-c1 complex mediates electron transfer from ubiquinol to cytochrome c. Contributes to the generation of a proton gradient across the mitochondrial membrane that is then used for ATP synthesis.</text>
</comment>
<comment type="cofactor">
    <cofactor evidence="2">
        <name>heme b</name>
        <dbReference type="ChEBI" id="CHEBI:60344"/>
    </cofactor>
    <text evidence="2">Binds 2 heme b groups non-covalently.</text>
</comment>
<comment type="subunit">
    <text evidence="2">The cytochrome bc1 complex contains 11 subunits: 3 respiratory subunits (MT-CYB, CYC1 and UQCRFS1), 2 core proteins (UQCRC1 and UQCRC2) and 6 low-molecular weight proteins (UQCRH/QCR6, UQCRB/QCR7, UQCRQ/QCR8, UQCR10/QCR9, UQCR11/QCR10 and a cleavage product of UQCRFS1). This cytochrome bc1 complex then forms a dimer.</text>
</comment>
<comment type="subcellular location">
    <subcellularLocation>
        <location evidence="2">Mitochondrion inner membrane</location>
        <topology evidence="2">Multi-pass membrane protein</topology>
    </subcellularLocation>
</comment>
<comment type="miscellaneous">
    <text evidence="1">Heme 1 (or BL or b562) is low-potential and absorbs at about 562 nm, and heme 2 (or BH or b566) is high-potential and absorbs at about 566 nm.</text>
</comment>
<comment type="similarity">
    <text evidence="3 4">Belongs to the cytochrome b family.</text>
</comment>
<comment type="caution">
    <text evidence="2">The full-length protein contains only eight transmembrane helices, not nine as predicted by bioinformatics tools.</text>
</comment>
<protein>
    <recommendedName>
        <fullName>Cytochrome b</fullName>
    </recommendedName>
    <alternativeName>
        <fullName>Complex III subunit 3</fullName>
    </alternativeName>
    <alternativeName>
        <fullName>Complex III subunit III</fullName>
    </alternativeName>
    <alternativeName>
        <fullName>Cytochrome b-c1 complex subunit 3</fullName>
    </alternativeName>
    <alternativeName>
        <fullName>Ubiquinol-cytochrome-c reductase complex cytochrome b subunit</fullName>
    </alternativeName>
</protein>
<dbReference type="EMBL" id="AY994373">
    <property type="protein sequence ID" value="AAY58060.1"/>
    <property type="molecule type" value="Genomic_DNA"/>
</dbReference>
<dbReference type="GO" id="GO:0005743">
    <property type="term" value="C:mitochondrial inner membrane"/>
    <property type="evidence" value="ECO:0007669"/>
    <property type="project" value="UniProtKB-SubCell"/>
</dbReference>
<dbReference type="GO" id="GO:0045275">
    <property type="term" value="C:respiratory chain complex III"/>
    <property type="evidence" value="ECO:0007669"/>
    <property type="project" value="InterPro"/>
</dbReference>
<dbReference type="GO" id="GO:0046872">
    <property type="term" value="F:metal ion binding"/>
    <property type="evidence" value="ECO:0007669"/>
    <property type="project" value="UniProtKB-KW"/>
</dbReference>
<dbReference type="GO" id="GO:0008121">
    <property type="term" value="F:ubiquinol-cytochrome-c reductase activity"/>
    <property type="evidence" value="ECO:0007669"/>
    <property type="project" value="InterPro"/>
</dbReference>
<dbReference type="GO" id="GO:0006122">
    <property type="term" value="P:mitochondrial electron transport, ubiquinol to cytochrome c"/>
    <property type="evidence" value="ECO:0007669"/>
    <property type="project" value="TreeGrafter"/>
</dbReference>
<dbReference type="CDD" id="cd00290">
    <property type="entry name" value="cytochrome_b_C"/>
    <property type="match status" value="1"/>
</dbReference>
<dbReference type="CDD" id="cd00284">
    <property type="entry name" value="Cytochrome_b_N"/>
    <property type="match status" value="1"/>
</dbReference>
<dbReference type="FunFam" id="1.20.810.10:FF:000002">
    <property type="entry name" value="Cytochrome b"/>
    <property type="match status" value="1"/>
</dbReference>
<dbReference type="Gene3D" id="1.20.810.10">
    <property type="entry name" value="Cytochrome Bc1 Complex, Chain C"/>
    <property type="match status" value="1"/>
</dbReference>
<dbReference type="InterPro" id="IPR005798">
    <property type="entry name" value="Cyt_b/b6_C"/>
</dbReference>
<dbReference type="InterPro" id="IPR036150">
    <property type="entry name" value="Cyt_b/b6_C_sf"/>
</dbReference>
<dbReference type="InterPro" id="IPR005797">
    <property type="entry name" value="Cyt_b/b6_N"/>
</dbReference>
<dbReference type="InterPro" id="IPR027387">
    <property type="entry name" value="Cytb/b6-like_sf"/>
</dbReference>
<dbReference type="InterPro" id="IPR030689">
    <property type="entry name" value="Cytochrome_b"/>
</dbReference>
<dbReference type="InterPro" id="IPR048260">
    <property type="entry name" value="Cytochrome_b_C_euk/bac"/>
</dbReference>
<dbReference type="InterPro" id="IPR048259">
    <property type="entry name" value="Cytochrome_b_N_euk/bac"/>
</dbReference>
<dbReference type="InterPro" id="IPR016174">
    <property type="entry name" value="Di-haem_cyt_TM"/>
</dbReference>
<dbReference type="PANTHER" id="PTHR19271">
    <property type="entry name" value="CYTOCHROME B"/>
    <property type="match status" value="1"/>
</dbReference>
<dbReference type="PANTHER" id="PTHR19271:SF16">
    <property type="entry name" value="CYTOCHROME B"/>
    <property type="match status" value="1"/>
</dbReference>
<dbReference type="Pfam" id="PF00032">
    <property type="entry name" value="Cytochrom_B_C"/>
    <property type="match status" value="1"/>
</dbReference>
<dbReference type="Pfam" id="PF00033">
    <property type="entry name" value="Cytochrome_B"/>
    <property type="match status" value="1"/>
</dbReference>
<dbReference type="PIRSF" id="PIRSF038885">
    <property type="entry name" value="COB"/>
    <property type="match status" value="1"/>
</dbReference>
<dbReference type="SUPFAM" id="SSF81648">
    <property type="entry name" value="a domain/subunit of cytochrome bc1 complex (Ubiquinol-cytochrome c reductase)"/>
    <property type="match status" value="1"/>
</dbReference>
<dbReference type="SUPFAM" id="SSF81342">
    <property type="entry name" value="Transmembrane di-heme cytochromes"/>
    <property type="match status" value="1"/>
</dbReference>
<dbReference type="PROSITE" id="PS51003">
    <property type="entry name" value="CYTB_CTER"/>
    <property type="match status" value="1"/>
</dbReference>
<dbReference type="PROSITE" id="PS51002">
    <property type="entry name" value="CYTB_NTER"/>
    <property type="match status" value="1"/>
</dbReference>
<reference key="1">
    <citation type="submission" date="2005-03" db="EMBL/GenBank/DDBJ databases">
        <title>New phylogenetic and taxonomic implications of molecular study of Crocidura suaveolens species group.</title>
        <authorList>
            <person name="Bannikova A.A."/>
            <person name="Lebedev V.S."/>
            <person name="Kramerov D.A."/>
            <person name="Zaitsev M.V."/>
        </authorList>
    </citation>
    <scope>NUCLEOTIDE SEQUENCE [GENOMIC DNA]</scope>
    <source>
        <strain>Isolate A-0V-6-A</strain>
    </source>
</reference>
<evidence type="ECO:0000250" key="1"/>
<evidence type="ECO:0000250" key="2">
    <source>
        <dbReference type="UniProtKB" id="P00157"/>
    </source>
</evidence>
<evidence type="ECO:0000255" key="3">
    <source>
        <dbReference type="PROSITE-ProRule" id="PRU00967"/>
    </source>
</evidence>
<evidence type="ECO:0000255" key="4">
    <source>
        <dbReference type="PROSITE-ProRule" id="PRU00968"/>
    </source>
</evidence>
<name>CYB_CROSG</name>
<geneLocation type="mitochondrion"/>
<feature type="chain" id="PRO_0000254794" description="Cytochrome b">
    <location>
        <begin position="1"/>
        <end position="379"/>
    </location>
</feature>
<feature type="transmembrane region" description="Helical" evidence="2">
    <location>
        <begin position="33"/>
        <end position="53"/>
    </location>
</feature>
<feature type="transmembrane region" description="Helical" evidence="2">
    <location>
        <begin position="77"/>
        <end position="98"/>
    </location>
</feature>
<feature type="transmembrane region" description="Helical" evidence="2">
    <location>
        <begin position="113"/>
        <end position="133"/>
    </location>
</feature>
<feature type="transmembrane region" description="Helical" evidence="2">
    <location>
        <begin position="178"/>
        <end position="198"/>
    </location>
</feature>
<feature type="transmembrane region" description="Helical" evidence="2">
    <location>
        <begin position="226"/>
        <end position="246"/>
    </location>
</feature>
<feature type="transmembrane region" description="Helical" evidence="2">
    <location>
        <begin position="288"/>
        <end position="308"/>
    </location>
</feature>
<feature type="transmembrane region" description="Helical" evidence="2">
    <location>
        <begin position="320"/>
        <end position="340"/>
    </location>
</feature>
<feature type="transmembrane region" description="Helical" evidence="2">
    <location>
        <begin position="347"/>
        <end position="367"/>
    </location>
</feature>
<feature type="binding site" description="axial binding residue" evidence="2">
    <location>
        <position position="83"/>
    </location>
    <ligand>
        <name>heme b</name>
        <dbReference type="ChEBI" id="CHEBI:60344"/>
        <label>b562</label>
    </ligand>
    <ligandPart>
        <name>Fe</name>
        <dbReference type="ChEBI" id="CHEBI:18248"/>
    </ligandPart>
</feature>
<feature type="binding site" description="axial binding residue" evidence="2">
    <location>
        <position position="97"/>
    </location>
    <ligand>
        <name>heme b</name>
        <dbReference type="ChEBI" id="CHEBI:60344"/>
        <label>b566</label>
    </ligand>
    <ligandPart>
        <name>Fe</name>
        <dbReference type="ChEBI" id="CHEBI:18248"/>
    </ligandPart>
</feature>
<feature type="binding site" description="axial binding residue" evidence="2">
    <location>
        <position position="182"/>
    </location>
    <ligand>
        <name>heme b</name>
        <dbReference type="ChEBI" id="CHEBI:60344"/>
        <label>b562</label>
    </ligand>
    <ligandPart>
        <name>Fe</name>
        <dbReference type="ChEBI" id="CHEBI:18248"/>
    </ligandPart>
</feature>
<feature type="binding site" description="axial binding residue" evidence="2">
    <location>
        <position position="196"/>
    </location>
    <ligand>
        <name>heme b</name>
        <dbReference type="ChEBI" id="CHEBI:60344"/>
        <label>b566</label>
    </ligand>
    <ligandPart>
        <name>Fe</name>
        <dbReference type="ChEBI" id="CHEBI:18248"/>
    </ligandPart>
</feature>
<feature type="binding site" evidence="2">
    <location>
        <position position="201"/>
    </location>
    <ligand>
        <name>a ubiquinone</name>
        <dbReference type="ChEBI" id="CHEBI:16389"/>
    </ligand>
</feature>
<gene>
    <name type="primary">MT-CYB</name>
    <name type="synonym">COB</name>
    <name type="synonym">CYTB</name>
    <name type="synonym">MTCYB</name>
</gene>
<accession>Q1X6J6</accession>
<keyword id="KW-0249">Electron transport</keyword>
<keyword id="KW-0349">Heme</keyword>
<keyword id="KW-0408">Iron</keyword>
<keyword id="KW-0472">Membrane</keyword>
<keyword id="KW-0479">Metal-binding</keyword>
<keyword id="KW-0496">Mitochondrion</keyword>
<keyword id="KW-0999">Mitochondrion inner membrane</keyword>
<keyword id="KW-0679">Respiratory chain</keyword>
<keyword id="KW-0812">Transmembrane</keyword>
<keyword id="KW-1133">Transmembrane helix</keyword>
<keyword id="KW-0813">Transport</keyword>
<keyword id="KW-0830">Ubiquinone</keyword>
<proteinExistence type="inferred from homology"/>
<organism>
    <name type="scientific">Crocidura suaveolens gueldenstaedtii</name>
    <name type="common">Gueldenstaedt's shrew</name>
    <name type="synonym">Crocidura gueldenstaedtii</name>
    <dbReference type="NCBI Taxonomy" id="458323"/>
    <lineage>
        <taxon>Eukaryota</taxon>
        <taxon>Metazoa</taxon>
        <taxon>Chordata</taxon>
        <taxon>Craniata</taxon>
        <taxon>Vertebrata</taxon>
        <taxon>Euteleostomi</taxon>
        <taxon>Mammalia</taxon>
        <taxon>Eutheria</taxon>
        <taxon>Laurasiatheria</taxon>
        <taxon>Eulipotyphla</taxon>
        <taxon>Soricidae</taxon>
        <taxon>Crocidurinae</taxon>
        <taxon>Crocidura</taxon>
    </lineage>
</organism>